<keyword id="KW-0238">DNA-binding</keyword>
<keyword id="KW-0489">Methyltransferase</keyword>
<keyword id="KW-0680">Restriction system</keyword>
<keyword id="KW-0949">S-adenosyl-L-methionine</keyword>
<keyword id="KW-0808">Transferase</keyword>
<proteinExistence type="evidence at protein level"/>
<sequence>MLKFIDLFAGIGGMRLGFEQAMHELGIETACVLSSEIDKHAQTTYAMNFHEQSQGDITQIQDFPSFDFLLAGFPCQPFSYAGKQKGFGDTRGTLFFEIERILKAYRPKGFLLENVRGLTTHDKGRTFKTILQKLHELNYGVYLILNSSNFQVPQNRLRVYIVGLDQSQPELTITSHIGATDSHKFKQLSNQASLFDTNKIMLVRDILEDHPLDKYNCSTDFVNKLLAFIGHPIKLNGKRLIDYRNGNSIHSWELGIKGECTSDEIQFMNALIANRRKKHFGAHQDGKKLTIEQIKTFFEHDDLDSIMQSLITKGYLQEVNGRFNPVAGNMSFEVFKFLDPDSVSITLVSSDAHKIGVVHQNRIRRITPRECARLQGFPDSFQFHPKDSLAYRQFGNSVSVPVVKAVILDLFKSADLASCF</sequence>
<protein>
    <recommendedName>
        <fullName evidence="4">Type II methyltransferase M.HgiCI</fullName>
        <shortName evidence="5">M.HgiCI</shortName>
        <ecNumber evidence="3">2.1.1.37</ecNumber>
    </recommendedName>
    <alternativeName>
        <fullName>Cytosine-specific methyltransferase HgiCI</fullName>
    </alternativeName>
    <alternativeName>
        <fullName>Modification methylase HgiCI</fullName>
    </alternativeName>
</protein>
<comment type="function">
    <text evidence="3 4">A methylase that recognizes the double-stranded sequence 5'-GGYRCC-3', methylates C-5 on both strands, and protects the DNA from cleavage by the HgiCI endonuclease.</text>
</comment>
<comment type="catalytic activity">
    <reaction evidence="2 3">
        <text>a 2'-deoxycytidine in DNA + S-adenosyl-L-methionine = a 5-methyl-2'-deoxycytidine in DNA + S-adenosyl-L-homocysteine + H(+)</text>
        <dbReference type="Rhea" id="RHEA:13681"/>
        <dbReference type="Rhea" id="RHEA-COMP:11369"/>
        <dbReference type="Rhea" id="RHEA-COMP:11370"/>
        <dbReference type="ChEBI" id="CHEBI:15378"/>
        <dbReference type="ChEBI" id="CHEBI:57856"/>
        <dbReference type="ChEBI" id="CHEBI:59789"/>
        <dbReference type="ChEBI" id="CHEBI:85452"/>
        <dbReference type="ChEBI" id="CHEBI:85454"/>
        <dbReference type="EC" id="2.1.1.37"/>
    </reaction>
</comment>
<comment type="similarity">
    <text evidence="1">Belongs to the class I-like SAM-binding methyltransferase superfamily. C5-methyltransferase family.</text>
</comment>
<reference key="1">
    <citation type="journal article" date="1991" name="Eur. J. Biochem.">
        <title>Cloning and molecular characterization of the HgiCI restriction/modification system from Herpetosiphon giganteus Hpg9 reveals high similarity to BanI.</title>
        <authorList>
            <person name="Erdmann D."/>
            <person name="Duesterhoeft A."/>
            <person name="Kroeger M."/>
        </authorList>
    </citation>
    <scope>NUCLEOTIDE SEQUENCE [GENOMIC DNA]</scope>
    <scope>FUNCTION</scope>
    <scope>CATALYTIC ACTIVITY</scope>
    <source>
        <strain>HPG9</strain>
    </source>
</reference>
<reference key="2">
    <citation type="submission" date="1994-07" db="EMBL/GenBank/DDBJ databases">
        <authorList>
            <person name="Kroeger M."/>
        </authorList>
    </citation>
    <scope>SEQUENCE REVISION</scope>
</reference>
<reference key="3">
    <citation type="journal article" date="1995" name="Gene">
        <title>Organization and gene expression within restriction-modification systems of Herpetosiphon giganteus.</title>
        <authorList>
            <person name="Kroeger M."/>
            <person name="Blum E."/>
            <person name="Deppe E."/>
            <person name="Duesterhoeft A."/>
            <person name="Erdmann D."/>
            <person name="Kilz S."/>
            <person name="Meyer-Rogge S."/>
            <person name="Moestl D."/>
        </authorList>
    </citation>
    <scope>DISCUSSION OF SEQUENCE</scope>
</reference>
<reference key="4">
    <citation type="journal article" date="2003" name="Nucleic Acids Res.">
        <title>A nomenclature for restriction enzymes, DNA methyltransferases, homing endonucleases and their genes.</title>
        <authorList>
            <person name="Roberts R.J."/>
            <person name="Belfort M."/>
            <person name="Bestor T."/>
            <person name="Bhagwat A.S."/>
            <person name="Bickle T.A."/>
            <person name="Bitinaite J."/>
            <person name="Blumenthal R.M."/>
            <person name="Degtyarev S.K."/>
            <person name="Dryden D.T."/>
            <person name="Dybvig K."/>
            <person name="Firman K."/>
            <person name="Gromova E.S."/>
            <person name="Gumport R.I."/>
            <person name="Halford S.E."/>
            <person name="Hattman S."/>
            <person name="Heitman J."/>
            <person name="Hornby D.P."/>
            <person name="Janulaitis A."/>
            <person name="Jeltsch A."/>
            <person name="Josephsen J."/>
            <person name="Kiss A."/>
            <person name="Klaenhammer T.R."/>
            <person name="Kobayashi I."/>
            <person name="Kong H."/>
            <person name="Krueger D.H."/>
            <person name="Lacks S."/>
            <person name="Marinus M.G."/>
            <person name="Miyahara M."/>
            <person name="Morgan R.D."/>
            <person name="Murray N.E."/>
            <person name="Nagaraja V."/>
            <person name="Piekarowicz A."/>
            <person name="Pingoud A."/>
            <person name="Raleigh E."/>
            <person name="Rao D.N."/>
            <person name="Reich N."/>
            <person name="Repin V.E."/>
            <person name="Selker E.U."/>
            <person name="Shaw P.C."/>
            <person name="Stein D.C."/>
            <person name="Stoddard B.L."/>
            <person name="Szybalski W."/>
            <person name="Trautner T.A."/>
            <person name="Van Etten J.L."/>
            <person name="Vitor J.M."/>
            <person name="Wilson G.G."/>
            <person name="Xu S.Y."/>
        </authorList>
    </citation>
    <scope>NOMENCLATURE</scope>
</reference>
<organism>
    <name type="scientific">Herpetosiphon aurantiacus</name>
    <name type="common">Herpetosiphon giganteus</name>
    <dbReference type="NCBI Taxonomy" id="65"/>
    <lineage>
        <taxon>Bacteria</taxon>
        <taxon>Bacillati</taxon>
        <taxon>Chloroflexota</taxon>
        <taxon>Chloroflexia</taxon>
        <taxon>Herpetosiphonales</taxon>
        <taxon>Herpetosiphonaceae</taxon>
        <taxon>Herpetosiphon</taxon>
    </lineage>
</organism>
<name>MTC1_HERAU</name>
<gene>
    <name type="primary">hgiCIM</name>
</gene>
<accession>P25263</accession>
<dbReference type="EC" id="2.1.1.37" evidence="3"/>
<dbReference type="EMBL" id="X55138">
    <property type="protein sequence ID" value="CAA38933.1"/>
    <property type="molecule type" value="Genomic_DNA"/>
</dbReference>
<dbReference type="PIR" id="S19707">
    <property type="entry name" value="S19707"/>
</dbReference>
<dbReference type="REBASE" id="3415">
    <property type="entry name" value="M.HgiCI"/>
</dbReference>
<dbReference type="PRO" id="PR:P25263"/>
<dbReference type="GO" id="GO:0003886">
    <property type="term" value="F:DNA (cytosine-5-)-methyltransferase activity"/>
    <property type="evidence" value="ECO:0007669"/>
    <property type="project" value="UniProtKB-EC"/>
</dbReference>
<dbReference type="GO" id="GO:0003677">
    <property type="term" value="F:DNA binding"/>
    <property type="evidence" value="ECO:0007669"/>
    <property type="project" value="UniProtKB-KW"/>
</dbReference>
<dbReference type="GO" id="GO:0009307">
    <property type="term" value="P:DNA restriction-modification system"/>
    <property type="evidence" value="ECO:0007669"/>
    <property type="project" value="UniProtKB-KW"/>
</dbReference>
<dbReference type="GO" id="GO:0032259">
    <property type="term" value="P:methylation"/>
    <property type="evidence" value="ECO:0007669"/>
    <property type="project" value="UniProtKB-KW"/>
</dbReference>
<dbReference type="CDD" id="cd00315">
    <property type="entry name" value="Cyt_C5_DNA_methylase"/>
    <property type="match status" value="1"/>
</dbReference>
<dbReference type="Gene3D" id="3.90.120.10">
    <property type="entry name" value="DNA Methylase, subunit A, domain 2"/>
    <property type="match status" value="1"/>
</dbReference>
<dbReference type="Gene3D" id="3.40.50.150">
    <property type="entry name" value="Vaccinia Virus protein VP39"/>
    <property type="match status" value="1"/>
</dbReference>
<dbReference type="InterPro" id="IPR050750">
    <property type="entry name" value="C5-MTase"/>
</dbReference>
<dbReference type="InterPro" id="IPR018117">
    <property type="entry name" value="C5_DNA_meth_AS"/>
</dbReference>
<dbReference type="InterPro" id="IPR001525">
    <property type="entry name" value="C5_MeTfrase"/>
</dbReference>
<dbReference type="InterPro" id="IPR031303">
    <property type="entry name" value="C5_meth_CS"/>
</dbReference>
<dbReference type="InterPro" id="IPR029063">
    <property type="entry name" value="SAM-dependent_MTases_sf"/>
</dbReference>
<dbReference type="NCBIfam" id="TIGR00675">
    <property type="entry name" value="dcm"/>
    <property type="match status" value="1"/>
</dbReference>
<dbReference type="PANTHER" id="PTHR46098">
    <property type="entry name" value="TRNA (CYTOSINE(38)-C(5))-METHYLTRANSFERASE"/>
    <property type="match status" value="1"/>
</dbReference>
<dbReference type="PANTHER" id="PTHR46098:SF1">
    <property type="entry name" value="TRNA (CYTOSINE(38)-C(5))-METHYLTRANSFERASE"/>
    <property type="match status" value="1"/>
</dbReference>
<dbReference type="Pfam" id="PF00145">
    <property type="entry name" value="DNA_methylase"/>
    <property type="match status" value="1"/>
</dbReference>
<dbReference type="PRINTS" id="PR00105">
    <property type="entry name" value="C5METTRFRASE"/>
</dbReference>
<dbReference type="SUPFAM" id="SSF53335">
    <property type="entry name" value="S-adenosyl-L-methionine-dependent methyltransferases"/>
    <property type="match status" value="1"/>
</dbReference>
<dbReference type="PROSITE" id="PS00094">
    <property type="entry name" value="C5_MTASE_1"/>
    <property type="match status" value="1"/>
</dbReference>
<dbReference type="PROSITE" id="PS00095">
    <property type="entry name" value="C5_MTASE_2"/>
    <property type="match status" value="1"/>
</dbReference>
<dbReference type="PROSITE" id="PS51679">
    <property type="entry name" value="SAM_MT_C5"/>
    <property type="match status" value="1"/>
</dbReference>
<evidence type="ECO:0000255" key="1">
    <source>
        <dbReference type="PROSITE-ProRule" id="PRU01016"/>
    </source>
</evidence>
<evidence type="ECO:0000255" key="2">
    <source>
        <dbReference type="PROSITE-ProRule" id="PRU10018"/>
    </source>
</evidence>
<evidence type="ECO:0000269" key="3">
    <source>
    </source>
</evidence>
<evidence type="ECO:0000303" key="4">
    <source>
    </source>
</evidence>
<evidence type="ECO:0000303" key="5">
    <source>
    </source>
</evidence>
<feature type="chain" id="PRO_0000087886" description="Type II methyltransferase M.HgiCI">
    <location>
        <begin position="1"/>
        <end position="420"/>
    </location>
</feature>
<feature type="domain" description="SAM-dependent MTase C5-type" evidence="1">
    <location>
        <begin position="2"/>
        <end position="417"/>
    </location>
</feature>
<feature type="active site" evidence="1 2">
    <location>
        <position position="75"/>
    </location>
</feature>